<keyword id="KW-0131">Cell cycle</keyword>
<keyword id="KW-0132">Cell division</keyword>
<keyword id="KW-0159">Chromosome partition</keyword>
<keyword id="KW-0963">Cytoplasm</keyword>
<keyword id="KW-0229">DNA integration</keyword>
<keyword id="KW-0233">DNA recombination</keyword>
<keyword id="KW-0238">DNA-binding</keyword>
<sequence length="356" mass="41429">MKRDLLLTKIEEYKNIMPWYVLDYYQSKLSVPYSFTTLYEYLKEYKRFFEWLIDSDLSKAARIADVDLTTLEHLSKKDMEAFILYLRERPSLNIYSTKKGVSQTTINRTLSALSSLYKYLTEEVENEHGEPYFYRNVMKKVATKKKRETLAARAENIKQKLFLGDETMAFLDYVDKEYEYKLSNRAKASFRKNKERDLAIIALLLASGIRLSEAVNLDLKDVNLNMMLVEVTRKGGKRDSVNVAAFAKPHLEAYLSVRKDRYQAEKQDVAFFLTAYRGLPNRIDASSIEKMVGKYSEGFKIRVTPHKLRHTLATRLYDTTKSQVLVSHQLGHASTQVTDLYTHIVNDEQKNALDKL</sequence>
<proteinExistence type="inferred from homology"/>
<dbReference type="EMBL" id="FM204883">
    <property type="protein sequence ID" value="CAW93891.1"/>
    <property type="molecule type" value="Genomic_DNA"/>
</dbReference>
<dbReference type="RefSeq" id="WP_012679572.1">
    <property type="nucleotide sequence ID" value="NC_012471.1"/>
</dbReference>
<dbReference type="SMR" id="C0MBC3"/>
<dbReference type="KEGG" id="seu:SEQ_1186"/>
<dbReference type="HOGENOM" id="CLU_027562_9_6_9"/>
<dbReference type="OrthoDB" id="283809at2"/>
<dbReference type="Proteomes" id="UP000001365">
    <property type="component" value="Chromosome"/>
</dbReference>
<dbReference type="GO" id="GO:0005737">
    <property type="term" value="C:cytoplasm"/>
    <property type="evidence" value="ECO:0007669"/>
    <property type="project" value="UniProtKB-SubCell"/>
</dbReference>
<dbReference type="GO" id="GO:0003677">
    <property type="term" value="F:DNA binding"/>
    <property type="evidence" value="ECO:0007669"/>
    <property type="project" value="UniProtKB-KW"/>
</dbReference>
<dbReference type="GO" id="GO:0009037">
    <property type="term" value="F:tyrosine-based site-specific recombinase activity"/>
    <property type="evidence" value="ECO:0007669"/>
    <property type="project" value="UniProtKB-UniRule"/>
</dbReference>
<dbReference type="GO" id="GO:0051301">
    <property type="term" value="P:cell division"/>
    <property type="evidence" value="ECO:0007669"/>
    <property type="project" value="UniProtKB-KW"/>
</dbReference>
<dbReference type="GO" id="GO:0007059">
    <property type="term" value="P:chromosome segregation"/>
    <property type="evidence" value="ECO:0007669"/>
    <property type="project" value="UniProtKB-UniRule"/>
</dbReference>
<dbReference type="GO" id="GO:0006310">
    <property type="term" value="P:DNA recombination"/>
    <property type="evidence" value="ECO:0007669"/>
    <property type="project" value="UniProtKB-UniRule"/>
</dbReference>
<dbReference type="Gene3D" id="1.10.150.130">
    <property type="match status" value="1"/>
</dbReference>
<dbReference type="Gene3D" id="1.10.443.10">
    <property type="entry name" value="Intergrase catalytic core"/>
    <property type="match status" value="1"/>
</dbReference>
<dbReference type="HAMAP" id="MF_01816">
    <property type="entry name" value="Recomb_XerS"/>
    <property type="match status" value="1"/>
</dbReference>
<dbReference type="InterPro" id="IPR044068">
    <property type="entry name" value="CB"/>
</dbReference>
<dbReference type="InterPro" id="IPR011010">
    <property type="entry name" value="DNA_brk_join_enz"/>
</dbReference>
<dbReference type="InterPro" id="IPR013762">
    <property type="entry name" value="Integrase-like_cat_sf"/>
</dbReference>
<dbReference type="InterPro" id="IPR002104">
    <property type="entry name" value="Integrase_catalytic"/>
</dbReference>
<dbReference type="InterPro" id="IPR010998">
    <property type="entry name" value="Integrase_recombinase_N"/>
</dbReference>
<dbReference type="InterPro" id="IPR004107">
    <property type="entry name" value="Integrase_SAM-like_N"/>
</dbReference>
<dbReference type="InterPro" id="IPR023670">
    <property type="entry name" value="Recomb_XerS"/>
</dbReference>
<dbReference type="InterPro" id="IPR050090">
    <property type="entry name" value="Tyrosine_recombinase_XerCD"/>
</dbReference>
<dbReference type="NCBIfam" id="NF003462">
    <property type="entry name" value="PRK05084.1"/>
    <property type="match status" value="1"/>
</dbReference>
<dbReference type="PANTHER" id="PTHR30349">
    <property type="entry name" value="PHAGE INTEGRASE-RELATED"/>
    <property type="match status" value="1"/>
</dbReference>
<dbReference type="PANTHER" id="PTHR30349:SF77">
    <property type="entry name" value="TYROSINE RECOMBINASE XERC"/>
    <property type="match status" value="1"/>
</dbReference>
<dbReference type="Pfam" id="PF02899">
    <property type="entry name" value="Phage_int_SAM_1"/>
    <property type="match status" value="1"/>
</dbReference>
<dbReference type="Pfam" id="PF00589">
    <property type="entry name" value="Phage_integrase"/>
    <property type="match status" value="1"/>
</dbReference>
<dbReference type="SUPFAM" id="SSF56349">
    <property type="entry name" value="DNA breaking-rejoining enzymes"/>
    <property type="match status" value="1"/>
</dbReference>
<dbReference type="PROSITE" id="PS51900">
    <property type="entry name" value="CB"/>
    <property type="match status" value="1"/>
</dbReference>
<dbReference type="PROSITE" id="PS51898">
    <property type="entry name" value="TYR_RECOMBINASE"/>
    <property type="match status" value="1"/>
</dbReference>
<reference key="1">
    <citation type="journal article" date="2009" name="PLoS Pathog.">
        <title>Genomic evidence for the evolution of Streptococcus equi: host restriction, increased virulence, and genetic exchange with human pathogens.</title>
        <authorList>
            <person name="Holden M.T.G."/>
            <person name="Heather Z."/>
            <person name="Paillot R."/>
            <person name="Steward K.F."/>
            <person name="Webb K."/>
            <person name="Ainslie F."/>
            <person name="Jourdan T."/>
            <person name="Bason N.C."/>
            <person name="Holroyd N.E."/>
            <person name="Mungall K."/>
            <person name="Quail M.A."/>
            <person name="Sanders M."/>
            <person name="Simmonds M."/>
            <person name="Willey D."/>
            <person name="Brooks K."/>
            <person name="Aanensen D.M."/>
            <person name="Spratt B.G."/>
            <person name="Jolley K.A."/>
            <person name="Maiden M.C.J."/>
            <person name="Kehoe M."/>
            <person name="Chanter N."/>
            <person name="Bentley S.D."/>
            <person name="Robinson C."/>
            <person name="Maskell D.J."/>
            <person name="Parkhill J."/>
            <person name="Waller A.S."/>
        </authorList>
    </citation>
    <scope>NUCLEOTIDE SEQUENCE [LARGE SCALE GENOMIC DNA]</scope>
    <source>
        <strain>4047</strain>
    </source>
</reference>
<comment type="function">
    <text evidence="1">Site-specific tyrosine recombinase, which acts by catalyzing the cutting and rejoining of the recombining DNA molecules. Essential to convert dimers of the bacterial chromosome into monomers to permit their segregation at cell division.</text>
</comment>
<comment type="activity regulation">
    <text evidence="1">FtsK is required for recombination.</text>
</comment>
<comment type="subcellular location">
    <subcellularLocation>
        <location evidence="1">Cytoplasm</location>
    </subcellularLocation>
</comment>
<comment type="similarity">
    <text evidence="1">Belongs to the 'phage' integrase family. XerS subfamily.</text>
</comment>
<name>XERS_STRE4</name>
<accession>C0MBC3</accession>
<gene>
    <name evidence="1" type="primary">xerS</name>
    <name type="ordered locus">SEQ_1186</name>
</gene>
<evidence type="ECO:0000255" key="1">
    <source>
        <dbReference type="HAMAP-Rule" id="MF_01816"/>
    </source>
</evidence>
<evidence type="ECO:0000255" key="2">
    <source>
        <dbReference type="PROSITE-ProRule" id="PRU01246"/>
    </source>
</evidence>
<evidence type="ECO:0000255" key="3">
    <source>
        <dbReference type="PROSITE-ProRule" id="PRU01248"/>
    </source>
</evidence>
<protein>
    <recommendedName>
        <fullName evidence="1">Tyrosine recombinase XerS</fullName>
    </recommendedName>
</protein>
<feature type="chain" id="PRO_1000187911" description="Tyrosine recombinase XerS">
    <location>
        <begin position="1"/>
        <end position="356"/>
    </location>
</feature>
<feature type="domain" description="Core-binding (CB)" evidence="3">
    <location>
        <begin position="16"/>
        <end position="121"/>
    </location>
</feature>
<feature type="domain" description="Tyr recombinase" evidence="2">
    <location>
        <begin position="169"/>
        <end position="354"/>
    </location>
</feature>
<feature type="active site" evidence="1">
    <location>
        <position position="210"/>
    </location>
</feature>
<feature type="active site" evidence="1">
    <location>
        <position position="234"/>
    </location>
</feature>
<feature type="active site" evidence="1">
    <location>
        <position position="306"/>
    </location>
</feature>
<feature type="active site" evidence="1">
    <location>
        <position position="309"/>
    </location>
</feature>
<feature type="active site" evidence="1">
    <location>
        <position position="332"/>
    </location>
</feature>
<feature type="active site" description="O-(3'-phospho-DNA)-tyrosine intermediate" evidence="1">
    <location>
        <position position="341"/>
    </location>
</feature>
<organism>
    <name type="scientific">Streptococcus equi subsp. equi (strain 4047)</name>
    <dbReference type="NCBI Taxonomy" id="553482"/>
    <lineage>
        <taxon>Bacteria</taxon>
        <taxon>Bacillati</taxon>
        <taxon>Bacillota</taxon>
        <taxon>Bacilli</taxon>
        <taxon>Lactobacillales</taxon>
        <taxon>Streptococcaceae</taxon>
        <taxon>Streptococcus</taxon>
    </lineage>
</organism>